<keyword id="KW-1185">Reference proteome</keyword>
<feature type="chain" id="PRO_0000202588" description="Uncharacterized protein YDR179W-A">
    <location>
        <begin position="1"/>
        <end position="463"/>
    </location>
</feature>
<dbReference type="EMBL" id="Z46727">
    <property type="protein sequence ID" value="CAA86685.1"/>
    <property type="status" value="ALT_FRAME"/>
    <property type="molecule type" value="Genomic_DNA"/>
</dbReference>
<dbReference type="EMBL" id="Z46727">
    <property type="protein sequence ID" value="CAA86686.1"/>
    <property type="status" value="ALT_FRAME"/>
    <property type="molecule type" value="Genomic_DNA"/>
</dbReference>
<dbReference type="EMBL" id="BK006938">
    <property type="protein sequence ID" value="DAA12022.1"/>
    <property type="molecule type" value="Genomic_DNA"/>
</dbReference>
<dbReference type="PIR" id="S49776">
    <property type="entry name" value="S49776"/>
</dbReference>
<dbReference type="BioGRID" id="32233">
    <property type="interactions" value="86"/>
</dbReference>
<dbReference type="FunCoup" id="Q03983">
    <property type="interactions" value="33"/>
</dbReference>
<dbReference type="IntAct" id="Q03983">
    <property type="interactions" value="1"/>
</dbReference>
<dbReference type="MINT" id="Q03983"/>
<dbReference type="STRING" id="4932.YDR179W-A"/>
<dbReference type="iPTMnet" id="Q03983"/>
<dbReference type="PaxDb" id="4932-YDR179W-A"/>
<dbReference type="PeptideAtlas" id="Q03983"/>
<dbReference type="EnsemblFungi" id="YDR179W-A_mRNA">
    <property type="protein sequence ID" value="YDR179W-A"/>
    <property type="gene ID" value="YDR179W-A"/>
</dbReference>
<dbReference type="KEGG" id="sce:YDR179W-A"/>
<dbReference type="AGR" id="SGD:S000002587"/>
<dbReference type="SGD" id="S000002587">
    <property type="gene designation" value="YDR179W-A"/>
</dbReference>
<dbReference type="VEuPathDB" id="FungiDB:YDR179W-A"/>
<dbReference type="eggNOG" id="ENOG502RYUQ">
    <property type="taxonomic scope" value="Eukaryota"/>
</dbReference>
<dbReference type="HOGENOM" id="CLU_038967_0_0_1"/>
<dbReference type="InParanoid" id="Q03983"/>
<dbReference type="OMA" id="ICIRIKL"/>
<dbReference type="OrthoDB" id="5582218at2759"/>
<dbReference type="BioCyc" id="YEAST:G3O-29768-MONOMER"/>
<dbReference type="BioGRID-ORCS" id="851760">
    <property type="hits" value="0 hits in 10 CRISPR screens"/>
</dbReference>
<dbReference type="PRO" id="PR:Q03983"/>
<dbReference type="Proteomes" id="UP000002311">
    <property type="component" value="Chromosome IV"/>
</dbReference>
<dbReference type="RNAct" id="Q03983">
    <property type="molecule type" value="protein"/>
</dbReference>
<dbReference type="GO" id="GO:0071561">
    <property type="term" value="C:nucleus-vacuole junction"/>
    <property type="evidence" value="ECO:0000314"/>
    <property type="project" value="SGD"/>
</dbReference>
<dbReference type="GO" id="GO:0032266">
    <property type="term" value="F:phosphatidylinositol-3-phosphate binding"/>
    <property type="evidence" value="ECO:0000250"/>
    <property type="project" value="SGD"/>
</dbReference>
<dbReference type="GO" id="GO:1990854">
    <property type="term" value="P:vacuole-ER tethering"/>
    <property type="evidence" value="ECO:0000250"/>
    <property type="project" value="SGD"/>
</dbReference>
<dbReference type="InterPro" id="IPR003114">
    <property type="entry name" value="Phox_assoc"/>
</dbReference>
<dbReference type="Pfam" id="PF02194">
    <property type="entry name" value="PXA"/>
    <property type="match status" value="1"/>
</dbReference>
<accession>Q03983</accession>
<accession>D6VSG2</accession>
<accession>Q03984</accession>
<evidence type="ECO:0000269" key="1">
    <source>
    </source>
</evidence>
<evidence type="ECO:0000305" key="2"/>
<gene>
    <name type="ordered locus">YDR179W-A</name>
    <name type="ORF">YD9395.13</name>
</gene>
<comment type="miscellaneous">
    <text evidence="1">Present with 259 molecules/cell in log phase SD medium.</text>
</comment>
<comment type="sequence caution" evidence="2">
    <conflict type="frameshift">
        <sequence resource="EMBL-CDS" id="CAA86685"/>
    </conflict>
</comment>
<comment type="sequence caution" evidence="2">
    <conflict type="frameshift">
        <sequence resource="EMBL-CDS" id="CAA86686"/>
    </conflict>
</comment>
<name>YD179_YEAST</name>
<proteinExistence type="evidence at protein level"/>
<sequence>MPTILYNTNSSLITKYRRPNASNQYKGFLSKKGHTRLNSKSSGDIWEKDCSHTKNSGNDVSFESEFEKDSVEYLRDLCFSIYPNSLHQKIRSIEALPDLQVNTFIALIFQNFVKSWYGIKIPTDDSKFLTELYNLVQDLITYLKSSKINYHALLLDYIPCLLSSHLKALNDSSQNNDLVYEQYCKLTLYDSKRYPMLFTEIIQSKMSTKSLLQRSFLDSFLNELVFGHIFNSIAEPYYLLEGLNKICIRIKLNSAGNTRNEVTHGKPKCDPWLFVSNVKHKILQMTRLLAYSTSTEAANMNTAEIQETAFLQRYIFTFFTDDFFKLSMRKPFLFSICRTLQHWISKLNALNRVMYRTFDNIVQTKITSPVTIGNLFSLLRHSLFPNDNMMGPPRVLPVGDAFLEFREECISNLWDVCMTYKLDHILAIKRSDIADLIICISKNRDCNKLLIYRIIDCVIAQLP</sequence>
<organism>
    <name type="scientific">Saccharomyces cerevisiae (strain ATCC 204508 / S288c)</name>
    <name type="common">Baker's yeast</name>
    <dbReference type="NCBI Taxonomy" id="559292"/>
    <lineage>
        <taxon>Eukaryota</taxon>
        <taxon>Fungi</taxon>
        <taxon>Dikarya</taxon>
        <taxon>Ascomycota</taxon>
        <taxon>Saccharomycotina</taxon>
        <taxon>Saccharomycetes</taxon>
        <taxon>Saccharomycetales</taxon>
        <taxon>Saccharomycetaceae</taxon>
        <taxon>Saccharomyces</taxon>
    </lineage>
</organism>
<protein>
    <recommendedName>
        <fullName>Uncharacterized protein YDR179W-A</fullName>
    </recommendedName>
</protein>
<reference key="1">
    <citation type="journal article" date="1997" name="Nature">
        <title>The nucleotide sequence of Saccharomyces cerevisiae chromosome IV.</title>
        <authorList>
            <person name="Jacq C."/>
            <person name="Alt-Moerbe J."/>
            <person name="Andre B."/>
            <person name="Arnold W."/>
            <person name="Bahr A."/>
            <person name="Ballesta J.P.G."/>
            <person name="Bargues M."/>
            <person name="Baron L."/>
            <person name="Becker A."/>
            <person name="Biteau N."/>
            <person name="Bloecker H."/>
            <person name="Blugeon C."/>
            <person name="Boskovic J."/>
            <person name="Brandt P."/>
            <person name="Brueckner M."/>
            <person name="Buitrago M.J."/>
            <person name="Coster F."/>
            <person name="Delaveau T."/>
            <person name="del Rey F."/>
            <person name="Dujon B."/>
            <person name="Eide L.G."/>
            <person name="Garcia-Cantalejo J.M."/>
            <person name="Goffeau A."/>
            <person name="Gomez-Peris A."/>
            <person name="Granotier C."/>
            <person name="Hanemann V."/>
            <person name="Hankeln T."/>
            <person name="Hoheisel J.D."/>
            <person name="Jaeger W."/>
            <person name="Jimenez A."/>
            <person name="Jonniaux J.-L."/>
            <person name="Kraemer C."/>
            <person name="Kuester H."/>
            <person name="Laamanen P."/>
            <person name="Legros Y."/>
            <person name="Louis E.J."/>
            <person name="Moeller-Rieker S."/>
            <person name="Monnet A."/>
            <person name="Moro M."/>
            <person name="Mueller-Auer S."/>
            <person name="Nussbaumer B."/>
            <person name="Paricio N."/>
            <person name="Paulin L."/>
            <person name="Perea J."/>
            <person name="Perez-Alonso M."/>
            <person name="Perez-Ortin J.E."/>
            <person name="Pohl T.M."/>
            <person name="Prydz H."/>
            <person name="Purnelle B."/>
            <person name="Rasmussen S.W."/>
            <person name="Remacha M.A."/>
            <person name="Revuelta J.L."/>
            <person name="Rieger M."/>
            <person name="Salom D."/>
            <person name="Saluz H.P."/>
            <person name="Saiz J.E."/>
            <person name="Saren A.-M."/>
            <person name="Schaefer M."/>
            <person name="Scharfe M."/>
            <person name="Schmidt E.R."/>
            <person name="Schneider C."/>
            <person name="Scholler P."/>
            <person name="Schwarz S."/>
            <person name="Soler-Mira A."/>
            <person name="Urrestarazu L.A."/>
            <person name="Verhasselt P."/>
            <person name="Vissers S."/>
            <person name="Voet M."/>
            <person name="Volckaert G."/>
            <person name="Wagner G."/>
            <person name="Wambutt R."/>
            <person name="Wedler E."/>
            <person name="Wedler H."/>
            <person name="Woelfl S."/>
            <person name="Harris D.E."/>
            <person name="Bowman S."/>
            <person name="Brown D."/>
            <person name="Churcher C.M."/>
            <person name="Connor R."/>
            <person name="Dedman K."/>
            <person name="Gentles S."/>
            <person name="Hamlin N."/>
            <person name="Hunt S."/>
            <person name="Jones L."/>
            <person name="McDonald S."/>
            <person name="Murphy L.D."/>
            <person name="Niblett D."/>
            <person name="Odell C."/>
            <person name="Oliver K."/>
            <person name="Rajandream M.A."/>
            <person name="Richards C."/>
            <person name="Shore L."/>
            <person name="Walsh S.V."/>
            <person name="Barrell B.G."/>
            <person name="Dietrich F.S."/>
            <person name="Mulligan J.T."/>
            <person name="Allen E."/>
            <person name="Araujo R."/>
            <person name="Aviles E."/>
            <person name="Berno A."/>
            <person name="Carpenter J."/>
            <person name="Chen E."/>
            <person name="Cherry J.M."/>
            <person name="Chung E."/>
            <person name="Duncan M."/>
            <person name="Hunicke-Smith S."/>
            <person name="Hyman R.W."/>
            <person name="Komp C."/>
            <person name="Lashkari D."/>
            <person name="Lew H."/>
            <person name="Lin D."/>
            <person name="Mosedale D."/>
            <person name="Nakahara K."/>
            <person name="Namath A."/>
            <person name="Oefner P."/>
            <person name="Oh C."/>
            <person name="Petel F.X."/>
            <person name="Roberts D."/>
            <person name="Schramm S."/>
            <person name="Schroeder M."/>
            <person name="Shogren T."/>
            <person name="Shroff N."/>
            <person name="Winant A."/>
            <person name="Yelton M.A."/>
            <person name="Botstein D."/>
            <person name="Davis R.W."/>
            <person name="Johnston M."/>
            <person name="Andrews S."/>
            <person name="Brinkman R."/>
            <person name="Cooper J."/>
            <person name="Ding H."/>
            <person name="Du Z."/>
            <person name="Favello A."/>
            <person name="Fulton L."/>
            <person name="Gattung S."/>
            <person name="Greco T."/>
            <person name="Hallsworth K."/>
            <person name="Hawkins J."/>
            <person name="Hillier L.W."/>
            <person name="Jier M."/>
            <person name="Johnson D."/>
            <person name="Johnston L."/>
            <person name="Kirsten J."/>
            <person name="Kucaba T."/>
            <person name="Langston Y."/>
            <person name="Latreille P."/>
            <person name="Le T."/>
            <person name="Mardis E."/>
            <person name="Menezes S."/>
            <person name="Miller N."/>
            <person name="Nhan M."/>
            <person name="Pauley A."/>
            <person name="Peluso D."/>
            <person name="Rifkin L."/>
            <person name="Riles L."/>
            <person name="Taich A."/>
            <person name="Trevaskis E."/>
            <person name="Vignati D."/>
            <person name="Wilcox L."/>
            <person name="Wohldman P."/>
            <person name="Vaudin M."/>
            <person name="Wilson R."/>
            <person name="Waterston R."/>
            <person name="Albermann K."/>
            <person name="Hani J."/>
            <person name="Heumann K."/>
            <person name="Kleine K."/>
            <person name="Mewes H.-W."/>
            <person name="Zollner A."/>
            <person name="Zaccaria P."/>
        </authorList>
    </citation>
    <scope>NUCLEOTIDE SEQUENCE [LARGE SCALE GENOMIC DNA]</scope>
    <source>
        <strain>ATCC 204508 / S288c</strain>
    </source>
</reference>
<reference key="2">
    <citation type="journal article" date="2014" name="G3 (Bethesda)">
        <title>The reference genome sequence of Saccharomyces cerevisiae: Then and now.</title>
        <authorList>
            <person name="Engel S.R."/>
            <person name="Dietrich F.S."/>
            <person name="Fisk D.G."/>
            <person name="Binkley G."/>
            <person name="Balakrishnan R."/>
            <person name="Costanzo M.C."/>
            <person name="Dwight S.S."/>
            <person name="Hitz B.C."/>
            <person name="Karra K."/>
            <person name="Nash R.S."/>
            <person name="Weng S."/>
            <person name="Wong E.D."/>
            <person name="Lloyd P."/>
            <person name="Skrzypek M.S."/>
            <person name="Miyasato S.R."/>
            <person name="Simison M."/>
            <person name="Cherry J.M."/>
        </authorList>
    </citation>
    <scope>GENOME REANNOTATION</scope>
    <source>
        <strain>ATCC 204508 / S288c</strain>
    </source>
</reference>
<reference key="3">
    <citation type="journal article" date="2003" name="Genome Biol.">
        <title>Reinvestigation of the Saccharomyces cerevisiae genome annotation by comparison to the genome of a related fungus: Ashbya gossypii.</title>
        <authorList>
            <person name="Brachat S."/>
            <person name="Dietrich F.S."/>
            <person name="Voegeli S."/>
            <person name="Zhang Z."/>
            <person name="Stuart L."/>
            <person name="Lerch A."/>
            <person name="Gates K."/>
            <person name="Gaffney T.D."/>
            <person name="Philippsen P."/>
        </authorList>
    </citation>
    <scope>IDENTIFICATION OF FRAMESHIFT</scope>
    <source>
        <strain>ATCC 204511 / S288c / AB972</strain>
    </source>
</reference>
<reference key="4">
    <citation type="journal article" date="2003" name="Nature">
        <title>Global analysis of protein expression in yeast.</title>
        <authorList>
            <person name="Ghaemmaghami S."/>
            <person name="Huh W.-K."/>
            <person name="Bower K."/>
            <person name="Howson R.W."/>
            <person name="Belle A."/>
            <person name="Dephoure N."/>
            <person name="O'Shea E.K."/>
            <person name="Weissman J.S."/>
        </authorList>
    </citation>
    <scope>LEVEL OF PROTEIN EXPRESSION [LARGE SCALE ANALYSIS]</scope>
</reference>